<protein>
    <recommendedName>
        <fullName evidence="1">Glyoxylate/hydroxypyruvate reductase A</fullName>
        <ecNumber evidence="1">1.1.1.79</ecNumber>
        <ecNumber evidence="1">1.1.1.81</ecNumber>
    </recommendedName>
    <alternativeName>
        <fullName evidence="1">2-ketoacid reductase</fullName>
    </alternativeName>
</protein>
<proteinExistence type="inferred from homology"/>
<reference key="1">
    <citation type="journal article" date="2001" name="Nature">
        <title>Complete genome sequence of a multiple drug resistant Salmonella enterica serovar Typhi CT18.</title>
        <authorList>
            <person name="Parkhill J."/>
            <person name="Dougan G."/>
            <person name="James K.D."/>
            <person name="Thomson N.R."/>
            <person name="Pickard D."/>
            <person name="Wain J."/>
            <person name="Churcher C.M."/>
            <person name="Mungall K.L."/>
            <person name="Bentley S.D."/>
            <person name="Holden M.T.G."/>
            <person name="Sebaihia M."/>
            <person name="Baker S."/>
            <person name="Basham D."/>
            <person name="Brooks K."/>
            <person name="Chillingworth T."/>
            <person name="Connerton P."/>
            <person name="Cronin A."/>
            <person name="Davis P."/>
            <person name="Davies R.M."/>
            <person name="Dowd L."/>
            <person name="White N."/>
            <person name="Farrar J."/>
            <person name="Feltwell T."/>
            <person name="Hamlin N."/>
            <person name="Haque A."/>
            <person name="Hien T.T."/>
            <person name="Holroyd S."/>
            <person name="Jagels K."/>
            <person name="Krogh A."/>
            <person name="Larsen T.S."/>
            <person name="Leather S."/>
            <person name="Moule S."/>
            <person name="O'Gaora P."/>
            <person name="Parry C."/>
            <person name="Quail M.A."/>
            <person name="Rutherford K.M."/>
            <person name="Simmonds M."/>
            <person name="Skelton J."/>
            <person name="Stevens K."/>
            <person name="Whitehead S."/>
            <person name="Barrell B.G."/>
        </authorList>
    </citation>
    <scope>NUCLEOTIDE SEQUENCE [LARGE SCALE GENOMIC DNA]</scope>
    <source>
        <strain>CT18</strain>
    </source>
</reference>
<reference key="2">
    <citation type="journal article" date="2003" name="J. Bacteriol.">
        <title>Comparative genomics of Salmonella enterica serovar Typhi strains Ty2 and CT18.</title>
        <authorList>
            <person name="Deng W."/>
            <person name="Liou S.-R."/>
            <person name="Plunkett G. III"/>
            <person name="Mayhew G.F."/>
            <person name="Rose D.J."/>
            <person name="Burland V."/>
            <person name="Kodoyianni V."/>
            <person name="Schwartz D.C."/>
            <person name="Blattner F.R."/>
        </authorList>
    </citation>
    <scope>NUCLEOTIDE SEQUENCE [LARGE SCALE GENOMIC DNA]</scope>
    <source>
        <strain>ATCC 700931 / Ty2</strain>
    </source>
</reference>
<sequence>MEIIFYHPTFNAAWWVNALEKALPHARVREWKVGDNNPADYALVWQPPVEMLAGRRLKAVFVLGAGVDAILSKLNAHPEMLDASIPLFRLEDTGMGLQMQEYAASQVLHWFRRFDDYQALKNQALWKPLPEYTREEFSVGIIGAGVLGAKVAESLQAWGFPLRCWSRSRKSWPGVESYVGREELRAFLNQTRVLINLLPNTAQTVGIINSELLDQLPDGAYVLNLARGVHVQEADLLAALDSGKLKGAMLDVFSQEPLPQESPLWRHPRVAMTPHIAAVTRPAEAIDYISRTITQLEKGEPVTGQVDRARGY</sequence>
<organism>
    <name type="scientific">Salmonella typhi</name>
    <dbReference type="NCBI Taxonomy" id="90370"/>
    <lineage>
        <taxon>Bacteria</taxon>
        <taxon>Pseudomonadati</taxon>
        <taxon>Pseudomonadota</taxon>
        <taxon>Gammaproteobacteria</taxon>
        <taxon>Enterobacterales</taxon>
        <taxon>Enterobacteriaceae</taxon>
        <taxon>Salmonella</taxon>
    </lineage>
</organism>
<feature type="chain" id="PRO_0000348371" description="Glyoxylate/hydroxypyruvate reductase A">
    <location>
        <begin position="1"/>
        <end position="312"/>
    </location>
</feature>
<feature type="active site" evidence="1">
    <location>
        <position position="227"/>
    </location>
</feature>
<feature type="active site" description="Proton donor" evidence="1">
    <location>
        <position position="275"/>
    </location>
</feature>
<gene>
    <name evidence="1" type="primary">ghrA</name>
    <name type="ordered locus">STY1172</name>
    <name type="ordered locus">t1785</name>
</gene>
<accession>Q8Z7M6</accession>
<accession>Q7C9A3</accession>
<comment type="function">
    <text evidence="1">Catalyzes the NADPH-dependent reduction of glyoxylate and hydroxypyruvate into glycolate and glycerate, respectively.</text>
</comment>
<comment type="catalytic activity">
    <reaction evidence="1">
        <text>glycolate + NADP(+) = glyoxylate + NADPH + H(+)</text>
        <dbReference type="Rhea" id="RHEA:10992"/>
        <dbReference type="ChEBI" id="CHEBI:15378"/>
        <dbReference type="ChEBI" id="CHEBI:29805"/>
        <dbReference type="ChEBI" id="CHEBI:36655"/>
        <dbReference type="ChEBI" id="CHEBI:57783"/>
        <dbReference type="ChEBI" id="CHEBI:58349"/>
        <dbReference type="EC" id="1.1.1.79"/>
    </reaction>
</comment>
<comment type="catalytic activity">
    <reaction evidence="1">
        <text>(R)-glycerate + NAD(+) = 3-hydroxypyruvate + NADH + H(+)</text>
        <dbReference type="Rhea" id="RHEA:17905"/>
        <dbReference type="ChEBI" id="CHEBI:15378"/>
        <dbReference type="ChEBI" id="CHEBI:16659"/>
        <dbReference type="ChEBI" id="CHEBI:17180"/>
        <dbReference type="ChEBI" id="CHEBI:57540"/>
        <dbReference type="ChEBI" id="CHEBI:57945"/>
        <dbReference type="EC" id="1.1.1.81"/>
    </reaction>
</comment>
<comment type="catalytic activity">
    <reaction evidence="1">
        <text>(R)-glycerate + NADP(+) = 3-hydroxypyruvate + NADPH + H(+)</text>
        <dbReference type="Rhea" id="RHEA:18657"/>
        <dbReference type="ChEBI" id="CHEBI:15378"/>
        <dbReference type="ChEBI" id="CHEBI:16659"/>
        <dbReference type="ChEBI" id="CHEBI:17180"/>
        <dbReference type="ChEBI" id="CHEBI:57783"/>
        <dbReference type="ChEBI" id="CHEBI:58349"/>
        <dbReference type="EC" id="1.1.1.81"/>
    </reaction>
</comment>
<comment type="subcellular location">
    <subcellularLocation>
        <location evidence="1">Cytoplasm</location>
    </subcellularLocation>
</comment>
<comment type="similarity">
    <text evidence="1">Belongs to the D-isomer specific 2-hydroxyacid dehydrogenase family. GhrA subfamily.</text>
</comment>
<keyword id="KW-0963">Cytoplasm</keyword>
<keyword id="KW-0520">NAD</keyword>
<keyword id="KW-0521">NADP</keyword>
<keyword id="KW-0560">Oxidoreductase</keyword>
<dbReference type="EC" id="1.1.1.79" evidence="1"/>
<dbReference type="EC" id="1.1.1.81" evidence="1"/>
<dbReference type="EMBL" id="AE014613">
    <property type="protein sequence ID" value="AAO69408.1"/>
    <property type="molecule type" value="Genomic_DNA"/>
</dbReference>
<dbReference type="EMBL" id="AL513382">
    <property type="protein sequence ID" value="CAD08259.1"/>
    <property type="molecule type" value="Genomic_DNA"/>
</dbReference>
<dbReference type="RefSeq" id="NP_455629.1">
    <property type="nucleotide sequence ID" value="NC_003198.1"/>
</dbReference>
<dbReference type="RefSeq" id="WP_000402555.1">
    <property type="nucleotide sequence ID" value="NZ_WSUR01000018.1"/>
</dbReference>
<dbReference type="SMR" id="Q8Z7M6"/>
<dbReference type="STRING" id="220341.gene:17585139"/>
<dbReference type="KEGG" id="stt:t1785"/>
<dbReference type="KEGG" id="sty:STY1172"/>
<dbReference type="PATRIC" id="fig|220341.7.peg.1172"/>
<dbReference type="eggNOG" id="COG0111">
    <property type="taxonomic scope" value="Bacteria"/>
</dbReference>
<dbReference type="HOGENOM" id="CLU_019796_1_0_6"/>
<dbReference type="OMA" id="VQMAEYV"/>
<dbReference type="OrthoDB" id="9787219at2"/>
<dbReference type="Proteomes" id="UP000000541">
    <property type="component" value="Chromosome"/>
</dbReference>
<dbReference type="Proteomes" id="UP000002670">
    <property type="component" value="Chromosome"/>
</dbReference>
<dbReference type="GO" id="GO:0005737">
    <property type="term" value="C:cytoplasm"/>
    <property type="evidence" value="ECO:0007669"/>
    <property type="project" value="UniProtKB-SubCell"/>
</dbReference>
<dbReference type="GO" id="GO:0030267">
    <property type="term" value="F:glyoxylate reductase (NADPH) activity"/>
    <property type="evidence" value="ECO:0007669"/>
    <property type="project" value="UniProtKB-UniRule"/>
</dbReference>
<dbReference type="GO" id="GO:0008465">
    <property type="term" value="F:hydroxypyruvate reductase (NADH) activity"/>
    <property type="evidence" value="ECO:0007669"/>
    <property type="project" value="RHEA"/>
</dbReference>
<dbReference type="GO" id="GO:0120509">
    <property type="term" value="F:hydroxypyruvate reductase (NADPH) activity"/>
    <property type="evidence" value="ECO:0007669"/>
    <property type="project" value="RHEA"/>
</dbReference>
<dbReference type="GO" id="GO:0051287">
    <property type="term" value="F:NAD binding"/>
    <property type="evidence" value="ECO:0007669"/>
    <property type="project" value="InterPro"/>
</dbReference>
<dbReference type="CDD" id="cd12164">
    <property type="entry name" value="GDH_like_2"/>
    <property type="match status" value="1"/>
</dbReference>
<dbReference type="FunFam" id="3.40.50.720:FF:000110">
    <property type="entry name" value="Glyoxylate/hydroxypyruvate reductase A"/>
    <property type="match status" value="1"/>
</dbReference>
<dbReference type="Gene3D" id="3.40.50.720">
    <property type="entry name" value="NAD(P)-binding Rossmann-like Domain"/>
    <property type="match status" value="2"/>
</dbReference>
<dbReference type="HAMAP" id="MF_01666">
    <property type="entry name" value="2_Hacid_dh_C_GhrA"/>
    <property type="match status" value="1"/>
</dbReference>
<dbReference type="InterPro" id="IPR006140">
    <property type="entry name" value="D-isomer_DH_NAD-bd"/>
</dbReference>
<dbReference type="InterPro" id="IPR023514">
    <property type="entry name" value="GhrA_Enterobacterales"/>
</dbReference>
<dbReference type="InterPro" id="IPR036291">
    <property type="entry name" value="NAD(P)-bd_dom_sf"/>
</dbReference>
<dbReference type="NCBIfam" id="NF012013">
    <property type="entry name" value="PRK15469.1"/>
    <property type="match status" value="1"/>
</dbReference>
<dbReference type="PANTHER" id="PTHR43333">
    <property type="entry name" value="2-HACID_DH_C DOMAIN-CONTAINING PROTEIN"/>
    <property type="match status" value="1"/>
</dbReference>
<dbReference type="PANTHER" id="PTHR43333:SF1">
    <property type="entry name" value="D-ISOMER SPECIFIC 2-HYDROXYACID DEHYDROGENASE NAD-BINDING DOMAIN-CONTAINING PROTEIN"/>
    <property type="match status" value="1"/>
</dbReference>
<dbReference type="Pfam" id="PF02826">
    <property type="entry name" value="2-Hacid_dh_C"/>
    <property type="match status" value="1"/>
</dbReference>
<dbReference type="SUPFAM" id="SSF51735">
    <property type="entry name" value="NAD(P)-binding Rossmann-fold domains"/>
    <property type="match status" value="1"/>
</dbReference>
<name>GHRA_SALTI</name>
<evidence type="ECO:0000255" key="1">
    <source>
        <dbReference type="HAMAP-Rule" id="MF_01666"/>
    </source>
</evidence>